<dbReference type="EMBL" id="L19443">
    <property type="protein sequence ID" value="AAC13954.1"/>
    <property type="molecule type" value="Genomic_DNA"/>
</dbReference>
<dbReference type="Proteomes" id="UP000151954">
    <property type="component" value="Segment"/>
</dbReference>
<dbReference type="GO" id="GO:0044204">
    <property type="term" value="C:host cell nuclear matrix"/>
    <property type="evidence" value="ECO:0007669"/>
    <property type="project" value="UniProtKB-SubCell"/>
</dbReference>
<dbReference type="GO" id="GO:0003690">
    <property type="term" value="F:double-stranded DNA binding"/>
    <property type="evidence" value="ECO:0007669"/>
    <property type="project" value="UniProtKB-UniRule"/>
</dbReference>
<dbReference type="GO" id="GO:0003697">
    <property type="term" value="F:single-stranded DNA binding"/>
    <property type="evidence" value="ECO:0007669"/>
    <property type="project" value="UniProtKB-UniRule"/>
</dbReference>
<dbReference type="GO" id="GO:0006260">
    <property type="term" value="P:DNA replication"/>
    <property type="evidence" value="ECO:0007669"/>
    <property type="project" value="UniProtKB-KW"/>
</dbReference>
<dbReference type="GO" id="GO:0039687">
    <property type="term" value="P:viral DNA strand displacement replication"/>
    <property type="evidence" value="ECO:0007669"/>
    <property type="project" value="UniProtKB-UniRule"/>
</dbReference>
<dbReference type="HAMAP" id="MF_04061">
    <property type="entry name" value="ADV_TERM"/>
    <property type="match status" value="1"/>
</dbReference>
<dbReference type="InterPro" id="IPR003391">
    <property type="entry name" value="Adeno_preterminal"/>
</dbReference>
<dbReference type="Pfam" id="PF02459">
    <property type="entry name" value="Adeno_terminal"/>
    <property type="match status" value="1"/>
</dbReference>
<protein>
    <recommendedName>
        <fullName evidence="1">Preterminal protein</fullName>
        <shortName evidence="1">pTP</shortName>
    </recommendedName>
    <alternativeName>
        <fullName evidence="1">Bellett protein</fullName>
    </alternativeName>
    <alternativeName>
        <fullName evidence="1">Precursor terminal protein</fullName>
    </alternativeName>
    <component>
        <recommendedName>
            <fullName evidence="1">Intermediate terminal protein</fullName>
            <shortName evidence="1">iTP</shortName>
        </recommendedName>
    </component>
    <component>
        <recommendedName>
            <fullName evidence="1">Terminal protein</fullName>
            <shortName evidence="1">TP</shortName>
        </recommendedName>
    </component>
</protein>
<proteinExistence type="inferred from homology"/>
<accession>P48313</accession>
<keyword id="KW-0190">Covalent protein-DNA linkage</keyword>
<keyword id="KW-0235">DNA replication</keyword>
<keyword id="KW-0238">DNA-binding</keyword>
<keyword id="KW-1048">Host nucleus</keyword>
<keyword id="KW-0597">Phosphoprotein</keyword>
<keyword id="KW-1185">Reference proteome</keyword>
<keyword id="KW-1194">Viral DNA replication</keyword>
<organismHost>
    <name type="scientific">Homo sapiens</name>
    <name type="common">Human</name>
    <dbReference type="NCBI Taxonomy" id="9606"/>
</organismHost>
<gene>
    <name evidence="1" type="primary">PTP</name>
</gene>
<sequence>MALSVQDCARLTGQSVPAMERFSPLRNIWNRVREYARAATTAAGITWLSRYVYHYHRLMLEDLAPGTPATLRWPLYREPPPHFLVGYQYLVRTCNDYVFESRAYSRLRYTEITQPGMQVVNWSVMANCTYTINTGSYHRFVDLDDFQNTLTQIQQAVLAERVVADLALLQPLRGFGSTRMADRGELEIPVESLMQDYYKDLRRCQNEAWGMADRLRIQQAGPKDVTLLATIRRLKTAYFNFLISSITSSAASLRIPHATVLSLPCDCDWLEAFLEKFSDPVQLDSLNEAWQSLPMQQMIRCTVSALSLPQGPHLLPPLSGSGMQGGVFELRPRENGRAVTETMRRRRGEMIQRFIDRLPVRRRRRRQPVPAPVSPEGPAVEEEEFMEIEETPAAFEQEVRETVAEAIRLLQEELTFAARNSQFFNFAVDFYEAMDRLEALGDINEMTLRRWVMYFFVCEHIATTLNYLFQRLRNYAVFARHVELNIAQVVMRARNTVGDVVYSRVWNENGLNAFSQLMRRISNDLAATVERAGHGELQDEEIDQFMSEIAYQDNSGDVQEILRQAAVNDADIDSVELSFRFRVRGPVVFSQRRHIQDLNRRVVAYASQLRAQHQPLPELHADVPLPPLQANPHPPLPPDARPQRTM</sequence>
<evidence type="ECO:0000255" key="1">
    <source>
        <dbReference type="HAMAP-Rule" id="MF_04061"/>
    </source>
</evidence>
<evidence type="ECO:0000256" key="2">
    <source>
        <dbReference type="SAM" id="MobiDB-lite"/>
    </source>
</evidence>
<feature type="chain" id="PRO_0000221897" description="Preterminal protein" evidence="1">
    <location>
        <begin position="1"/>
        <end position="646"/>
    </location>
</feature>
<feature type="chain" id="PRO_0000433938" description="Intermediate terminal protein" evidence="1">
    <location>
        <begin position="176"/>
        <end position="646"/>
    </location>
</feature>
<feature type="chain" id="PRO_0000433939" description="Terminal protein" evidence="1">
    <location>
        <begin position="327"/>
        <end position="646"/>
    </location>
</feature>
<feature type="region of interest" description="Disordered" evidence="2">
    <location>
        <begin position="619"/>
        <end position="646"/>
    </location>
</feature>
<feature type="short sequence motif" description="Nuclear localization signal" evidence="1">
    <location>
        <begin position="357"/>
        <end position="366"/>
    </location>
</feature>
<feature type="compositionally biased region" description="Pro residues" evidence="2">
    <location>
        <begin position="624"/>
        <end position="640"/>
    </location>
</feature>
<feature type="site" description="Cleavage; by adenovirus protease" evidence="1">
    <location>
        <begin position="175"/>
        <end position="176"/>
    </location>
</feature>
<feature type="site" description="Cleavage; by adenovirus protease" evidence="1">
    <location>
        <begin position="326"/>
        <end position="327"/>
    </location>
</feature>
<feature type="site" description="Priming of strand displacement replication by covalently linking the first nucleotide of the new DNA chain" evidence="1">
    <location>
        <position position="555"/>
    </location>
</feature>
<feature type="modified residue" description="O-(5'-phospho-DNA)-serine" evidence="1">
    <location>
        <position position="555"/>
    </location>
</feature>
<organism>
    <name type="scientific">Human adenovirus F serotype 40</name>
    <name type="common">HAdV-40</name>
    <name type="synonym">Human adenovirus 40</name>
    <dbReference type="NCBI Taxonomy" id="28284"/>
    <lineage>
        <taxon>Viruses</taxon>
        <taxon>Varidnaviria</taxon>
        <taxon>Bamfordvirae</taxon>
        <taxon>Preplasmiviricota</taxon>
        <taxon>Tectiliviricetes</taxon>
        <taxon>Rowavirales</taxon>
        <taxon>Adenoviridae</taxon>
        <taxon>Mastadenovirus</taxon>
        <taxon>Human mastadenovirus F</taxon>
    </lineage>
</organism>
<name>TERM_ADE40</name>
<reference key="1">
    <citation type="journal article" date="1993" name="J. Mol. Biol.">
        <title>The DNA sequence of adenovirus type 40.</title>
        <authorList>
            <person name="Davison A.J."/>
            <person name="Telford E.A."/>
            <person name="Watson M.S."/>
            <person name="McBride K."/>
            <person name="Mautner V."/>
        </authorList>
    </citation>
    <scope>NUCLEOTIDE SEQUENCE [LARGE SCALE GENOMIC DNA]</scope>
    <source>
        <strain>Dugan</strain>
    </source>
</reference>
<comment type="function">
    <text evidence="1">Protein covalently bound to the viral DNA that acts as a primer for viral genomic replication by DNA strand displacement. Assembles on the viral origin of replication in an initiation complex with viral polymerase, DBP, host NFIA and host POU2F1/OCT1. During initiation, the polymerase covalently couples the first dCTP with Ser-580 of pTP. The terminal protein stimulates the template activity over 20 fold compared to protein-free templates. Neo-synthesized viral genomes are linked to two preterminal proteins, one for each 5' end. These new genomes are encapsidated in the nucleus, and during capsid maturation by viral protease, preterminal protein is first cleaved into intermediary (iTP), then into mature TP. May play a role in host nuclear matrix localization of genomic DNA.</text>
</comment>
<comment type="subunit">
    <text evidence="1">Heterodimer with the polymerase; this heterodimer binds to bp 9 to 18 of the genome. Interacts with host POU2F1; POU2F1 binds to the auxiliary sequences in the inverted terminal repeats and tethers the pTP-POL heterodimer to the origin DNA thereby participating in the assembly of the pre-initiation complex (POL-TP-DBP-NFIA-POU2F1).</text>
</comment>
<comment type="subcellular location">
    <subcellularLocation>
        <location evidence="1">Host nucleus matrix</location>
    </subcellularLocation>
</comment>
<comment type="PTM">
    <text evidence="1">Preterminal protein is used to replicate viral genome, upon genomic encapsidation it is processed first into iTP and finally into TP by adenovirus protease.</text>
</comment>
<comment type="similarity">
    <text evidence="1">Belongs to the adenoviridae terminal protein family.</text>
</comment>